<comment type="function">
    <text evidence="1">Produces ATP from ADP in the presence of a proton gradient across the membrane. The catalytic sites are hosted primarily by the beta subunits.</text>
</comment>
<comment type="catalytic activity">
    <reaction evidence="1">
        <text>ATP + H2O + 4 H(+)(in) = ADP + phosphate + 5 H(+)(out)</text>
        <dbReference type="Rhea" id="RHEA:57720"/>
        <dbReference type="ChEBI" id="CHEBI:15377"/>
        <dbReference type="ChEBI" id="CHEBI:15378"/>
        <dbReference type="ChEBI" id="CHEBI:30616"/>
        <dbReference type="ChEBI" id="CHEBI:43474"/>
        <dbReference type="ChEBI" id="CHEBI:456216"/>
        <dbReference type="EC" id="7.1.2.2"/>
    </reaction>
</comment>
<comment type="subunit">
    <text evidence="1">F-type ATPases have 2 components, CF(1) - the catalytic core - and CF(0) - the membrane proton channel. CF(1) has five subunits: alpha(3), beta(3), gamma(1), delta(1), epsilon(1). CF(0) has three main subunits: a(1), b(2) and c(9-12). The alpha and beta chains form an alternating ring which encloses part of the gamma chain. CF(1) is attached to CF(0) by a central stalk formed by the gamma and epsilon chains, while a peripheral stalk is formed by the delta and b chains.</text>
</comment>
<comment type="subcellular location">
    <subcellularLocation>
        <location evidence="1">Cell membrane</location>
        <topology evidence="1">Peripheral membrane protein</topology>
    </subcellularLocation>
</comment>
<comment type="similarity">
    <text evidence="1">Belongs to the ATPase alpha/beta chains family.</text>
</comment>
<accession>B0RED4</accession>
<sequence>MTDTATRPVASDSVAGVGRIVRVTGPVVDIEFPHDSIPPVYNALKTTITIGEDSTEITLEIALHLGDDVVRAIALKPTDGLVRGQEVRDTGAAISVPVGDITKGKVFNVTGDILNNEGGEPIEITERWPIHRKPPMFDQLESKTQLFETGIKVIDLLTPYVQGGKIGLFGGAGVGKTVLIQEMIQRVAQDHGGVSVFAGVGERTREGNDLIMEMEEAGVFDKTALVFGQMDEPPGTRLRVALSALTMAEYFRDVKNQDVLLFIDNIFRFTQAGSEVSTLLGRMPSAVGYQPNLADEMGVLQERITSTRGHSITSLQAIYVPADDYTDPAPATTFAHLDATTELSREIASRGLYPAVDPLTSTSRILDPRYLGQAHYDTATRVKAILQKNKELQEIIAILGVDELSEEDKVTVSRARRIQQFLSQNTYMAKKFTGVEGSTVPLKNTIESFSKIADGDYDHVAEQAFFNVGDLDDVERRWSEIQKENG</sequence>
<reference key="1">
    <citation type="journal article" date="2008" name="J. Bacteriol.">
        <title>Genome of the actinomycete plant pathogen Clavibacter michiganensis subsp. sepedonicus suggests recent niche adaptation.</title>
        <authorList>
            <person name="Bentley S.D."/>
            <person name="Corton C."/>
            <person name="Brown S.E."/>
            <person name="Barron A."/>
            <person name="Clark L."/>
            <person name="Doggett J."/>
            <person name="Harris B."/>
            <person name="Ormond D."/>
            <person name="Quail M.A."/>
            <person name="May G."/>
            <person name="Francis D."/>
            <person name="Knudson D."/>
            <person name="Parkhill J."/>
            <person name="Ishimaru C.A."/>
        </authorList>
    </citation>
    <scope>NUCLEOTIDE SEQUENCE [LARGE SCALE GENOMIC DNA]</scope>
    <source>
        <strain>ATCC 33113 / DSM 20744 / JCM 9667 / LMG 2889 / ICMP 2535 / C-1</strain>
    </source>
</reference>
<feature type="chain" id="PRO_0000339514" description="ATP synthase subunit beta">
    <location>
        <begin position="1"/>
        <end position="486"/>
    </location>
</feature>
<feature type="binding site" evidence="1">
    <location>
        <begin position="170"/>
        <end position="177"/>
    </location>
    <ligand>
        <name>ATP</name>
        <dbReference type="ChEBI" id="CHEBI:30616"/>
    </ligand>
</feature>
<proteinExistence type="inferred from homology"/>
<evidence type="ECO:0000255" key="1">
    <source>
        <dbReference type="HAMAP-Rule" id="MF_01347"/>
    </source>
</evidence>
<protein>
    <recommendedName>
        <fullName evidence="1">ATP synthase subunit beta</fullName>
        <ecNumber evidence="1">7.1.2.2</ecNumber>
    </recommendedName>
    <alternativeName>
        <fullName evidence="1">ATP synthase F1 sector subunit beta</fullName>
    </alternativeName>
    <alternativeName>
        <fullName evidence="1">F-ATPase subunit beta</fullName>
    </alternativeName>
</protein>
<keyword id="KW-0066">ATP synthesis</keyword>
<keyword id="KW-0067">ATP-binding</keyword>
<keyword id="KW-1003">Cell membrane</keyword>
<keyword id="KW-0139">CF(1)</keyword>
<keyword id="KW-0375">Hydrogen ion transport</keyword>
<keyword id="KW-0406">Ion transport</keyword>
<keyword id="KW-0472">Membrane</keyword>
<keyword id="KW-0547">Nucleotide-binding</keyword>
<keyword id="KW-1278">Translocase</keyword>
<keyword id="KW-0813">Transport</keyword>
<gene>
    <name evidence="1" type="primary">atpD</name>
    <name type="ordered locus">CMS1924</name>
</gene>
<dbReference type="EC" id="7.1.2.2" evidence="1"/>
<dbReference type="EMBL" id="AM849034">
    <property type="protein sequence ID" value="CAQ02026.1"/>
    <property type="molecule type" value="Genomic_DNA"/>
</dbReference>
<dbReference type="RefSeq" id="WP_012299257.1">
    <property type="nucleotide sequence ID" value="NZ_MZMN01000003.1"/>
</dbReference>
<dbReference type="SMR" id="B0RED4"/>
<dbReference type="STRING" id="31964.CMS1924"/>
<dbReference type="KEGG" id="cms:CMS1924"/>
<dbReference type="eggNOG" id="COG0055">
    <property type="taxonomic scope" value="Bacteria"/>
</dbReference>
<dbReference type="HOGENOM" id="CLU_022398_0_2_11"/>
<dbReference type="OrthoDB" id="9801639at2"/>
<dbReference type="Proteomes" id="UP000001318">
    <property type="component" value="Chromosome"/>
</dbReference>
<dbReference type="GO" id="GO:0005886">
    <property type="term" value="C:plasma membrane"/>
    <property type="evidence" value="ECO:0007669"/>
    <property type="project" value="UniProtKB-SubCell"/>
</dbReference>
<dbReference type="GO" id="GO:0045259">
    <property type="term" value="C:proton-transporting ATP synthase complex"/>
    <property type="evidence" value="ECO:0007669"/>
    <property type="project" value="UniProtKB-KW"/>
</dbReference>
<dbReference type="GO" id="GO:0005524">
    <property type="term" value="F:ATP binding"/>
    <property type="evidence" value="ECO:0007669"/>
    <property type="project" value="UniProtKB-UniRule"/>
</dbReference>
<dbReference type="GO" id="GO:0016887">
    <property type="term" value="F:ATP hydrolysis activity"/>
    <property type="evidence" value="ECO:0007669"/>
    <property type="project" value="InterPro"/>
</dbReference>
<dbReference type="GO" id="GO:0046933">
    <property type="term" value="F:proton-transporting ATP synthase activity, rotational mechanism"/>
    <property type="evidence" value="ECO:0007669"/>
    <property type="project" value="UniProtKB-UniRule"/>
</dbReference>
<dbReference type="CDD" id="cd18110">
    <property type="entry name" value="ATP-synt_F1_beta_C"/>
    <property type="match status" value="1"/>
</dbReference>
<dbReference type="CDD" id="cd18115">
    <property type="entry name" value="ATP-synt_F1_beta_N"/>
    <property type="match status" value="1"/>
</dbReference>
<dbReference type="CDD" id="cd01133">
    <property type="entry name" value="F1-ATPase_beta_CD"/>
    <property type="match status" value="1"/>
</dbReference>
<dbReference type="FunFam" id="1.10.1140.10:FF:000005">
    <property type="entry name" value="ATP synthase subunit beta"/>
    <property type="match status" value="1"/>
</dbReference>
<dbReference type="FunFam" id="2.40.10.170:FF:000005">
    <property type="entry name" value="ATP synthase subunit beta"/>
    <property type="match status" value="1"/>
</dbReference>
<dbReference type="FunFam" id="3.40.50.300:FF:000004">
    <property type="entry name" value="ATP synthase subunit beta"/>
    <property type="match status" value="1"/>
</dbReference>
<dbReference type="Gene3D" id="2.40.10.170">
    <property type="match status" value="1"/>
</dbReference>
<dbReference type="Gene3D" id="1.10.1140.10">
    <property type="entry name" value="Bovine Mitochondrial F1-atpase, Atp Synthase Beta Chain, Chain D, domain 3"/>
    <property type="match status" value="1"/>
</dbReference>
<dbReference type="Gene3D" id="3.40.50.300">
    <property type="entry name" value="P-loop containing nucleotide triphosphate hydrolases"/>
    <property type="match status" value="1"/>
</dbReference>
<dbReference type="HAMAP" id="MF_01347">
    <property type="entry name" value="ATP_synth_beta_bact"/>
    <property type="match status" value="1"/>
</dbReference>
<dbReference type="InterPro" id="IPR003593">
    <property type="entry name" value="AAA+_ATPase"/>
</dbReference>
<dbReference type="InterPro" id="IPR055190">
    <property type="entry name" value="ATP-synt_VA_C"/>
</dbReference>
<dbReference type="InterPro" id="IPR005722">
    <property type="entry name" value="ATP_synth_F1_bsu"/>
</dbReference>
<dbReference type="InterPro" id="IPR020003">
    <property type="entry name" value="ATPase_a/bsu_AS"/>
</dbReference>
<dbReference type="InterPro" id="IPR050053">
    <property type="entry name" value="ATPase_alpha/beta_chains"/>
</dbReference>
<dbReference type="InterPro" id="IPR004100">
    <property type="entry name" value="ATPase_F1/V1/A1_a/bsu_N"/>
</dbReference>
<dbReference type="InterPro" id="IPR036121">
    <property type="entry name" value="ATPase_F1/V1/A1_a/bsu_N_sf"/>
</dbReference>
<dbReference type="InterPro" id="IPR000194">
    <property type="entry name" value="ATPase_F1/V1/A1_a/bsu_nucl-bd"/>
</dbReference>
<dbReference type="InterPro" id="IPR024034">
    <property type="entry name" value="ATPase_F1/V1_b/a_C"/>
</dbReference>
<dbReference type="InterPro" id="IPR027417">
    <property type="entry name" value="P-loop_NTPase"/>
</dbReference>
<dbReference type="NCBIfam" id="TIGR01039">
    <property type="entry name" value="atpD"/>
    <property type="match status" value="1"/>
</dbReference>
<dbReference type="PANTHER" id="PTHR15184">
    <property type="entry name" value="ATP SYNTHASE"/>
    <property type="match status" value="1"/>
</dbReference>
<dbReference type="PANTHER" id="PTHR15184:SF71">
    <property type="entry name" value="ATP SYNTHASE SUBUNIT BETA, MITOCHONDRIAL"/>
    <property type="match status" value="1"/>
</dbReference>
<dbReference type="Pfam" id="PF00006">
    <property type="entry name" value="ATP-synt_ab"/>
    <property type="match status" value="1"/>
</dbReference>
<dbReference type="Pfam" id="PF02874">
    <property type="entry name" value="ATP-synt_ab_N"/>
    <property type="match status" value="1"/>
</dbReference>
<dbReference type="Pfam" id="PF22919">
    <property type="entry name" value="ATP-synt_VA_C"/>
    <property type="match status" value="1"/>
</dbReference>
<dbReference type="SMART" id="SM00382">
    <property type="entry name" value="AAA"/>
    <property type="match status" value="1"/>
</dbReference>
<dbReference type="SUPFAM" id="SSF47917">
    <property type="entry name" value="C-terminal domain of alpha and beta subunits of F1 ATP synthase"/>
    <property type="match status" value="1"/>
</dbReference>
<dbReference type="SUPFAM" id="SSF50615">
    <property type="entry name" value="N-terminal domain of alpha and beta subunits of F1 ATP synthase"/>
    <property type="match status" value="1"/>
</dbReference>
<dbReference type="SUPFAM" id="SSF52540">
    <property type="entry name" value="P-loop containing nucleoside triphosphate hydrolases"/>
    <property type="match status" value="1"/>
</dbReference>
<dbReference type="PROSITE" id="PS00152">
    <property type="entry name" value="ATPASE_ALPHA_BETA"/>
    <property type="match status" value="1"/>
</dbReference>
<name>ATPB_CLASE</name>
<organism>
    <name type="scientific">Clavibacter sepedonicus</name>
    <name type="common">Clavibacter michiganensis subsp. sepedonicus</name>
    <dbReference type="NCBI Taxonomy" id="31964"/>
    <lineage>
        <taxon>Bacteria</taxon>
        <taxon>Bacillati</taxon>
        <taxon>Actinomycetota</taxon>
        <taxon>Actinomycetes</taxon>
        <taxon>Micrococcales</taxon>
        <taxon>Microbacteriaceae</taxon>
        <taxon>Clavibacter</taxon>
    </lineage>
</organism>